<evidence type="ECO:0000255" key="1">
    <source>
        <dbReference type="HAMAP-Rule" id="MF_01864"/>
    </source>
</evidence>
<evidence type="ECO:0000255" key="2">
    <source>
        <dbReference type="PROSITE-ProRule" id="PRU01266"/>
    </source>
</evidence>
<keyword id="KW-0004">4Fe-4S</keyword>
<keyword id="KW-0963">Cytoplasm</keyword>
<keyword id="KW-0408">Iron</keyword>
<keyword id="KW-0411">Iron-sulfur</keyword>
<keyword id="KW-0479">Metal-binding</keyword>
<keyword id="KW-1185">Reference proteome</keyword>
<keyword id="KW-0949">S-adenosyl-L-methionine</keyword>
<keyword id="KW-0808">Transferase</keyword>
<keyword id="KW-0819">tRNA processing</keyword>
<sequence length="480" mass="54929">MSKGTRDRKNIYVSPEEMARQQRFIDEIKELNYRKEVKTGKKKLYCLNTFGCQMNEHDSEKLAGMLAEMGYAETDNVNESDLVIYNTCCVRENAELKVYGHLGMLKPLKNQKPDLVIAVCGCMMQQPEVVEHIKKTYSHVDLIFGTHNLYKFPELLYSAMDSQTTVVDVWDCDGQIAENVAIERKDGVKAWVTVMYGCNNFCTYCIVPYVRGRERSRSMDDILEEVRMLGRQGFKEITLLGQNVNSYGKDIGDGTSFAELIREVNKIPGIERIRFTTSHPKDLSDDLIYAMRDCEKVCEHLHLPFQAGSTRILKLMNRKYTKEDYINLVAKIKENIPDIALTTDIIVGFPGETEEDFSDTLDILEKVRFDNAYTFLYSKRTGTPAAKMEDQVPEEVKKERFQRLLETQNRISKEINDTFLGKVVEVLVEGVSKTNDKIFTGRTRGNKVVNFEADASLIGKLVNVRINTVKTWSLEGSIVR</sequence>
<comment type="function">
    <text evidence="1">Catalyzes the methylthiolation of N6-(dimethylallyl)adenosine (i(6)A), leading to the formation of 2-methylthio-N6-(dimethylallyl)adenosine (ms(2)i(6)A) at position 37 in tRNAs that read codons beginning with uridine.</text>
</comment>
<comment type="catalytic activity">
    <reaction evidence="1">
        <text>N(6)-dimethylallyladenosine(37) in tRNA + (sulfur carrier)-SH + AH2 + 2 S-adenosyl-L-methionine = 2-methylsulfanyl-N(6)-dimethylallyladenosine(37) in tRNA + (sulfur carrier)-H + 5'-deoxyadenosine + L-methionine + A + S-adenosyl-L-homocysteine + 2 H(+)</text>
        <dbReference type="Rhea" id="RHEA:37067"/>
        <dbReference type="Rhea" id="RHEA-COMP:10375"/>
        <dbReference type="Rhea" id="RHEA-COMP:10376"/>
        <dbReference type="Rhea" id="RHEA-COMP:14737"/>
        <dbReference type="Rhea" id="RHEA-COMP:14739"/>
        <dbReference type="ChEBI" id="CHEBI:13193"/>
        <dbReference type="ChEBI" id="CHEBI:15378"/>
        <dbReference type="ChEBI" id="CHEBI:17319"/>
        <dbReference type="ChEBI" id="CHEBI:17499"/>
        <dbReference type="ChEBI" id="CHEBI:29917"/>
        <dbReference type="ChEBI" id="CHEBI:57844"/>
        <dbReference type="ChEBI" id="CHEBI:57856"/>
        <dbReference type="ChEBI" id="CHEBI:59789"/>
        <dbReference type="ChEBI" id="CHEBI:64428"/>
        <dbReference type="ChEBI" id="CHEBI:74415"/>
        <dbReference type="ChEBI" id="CHEBI:74417"/>
        <dbReference type="EC" id="2.8.4.3"/>
    </reaction>
</comment>
<comment type="cofactor">
    <cofactor evidence="1">
        <name>[4Fe-4S] cluster</name>
        <dbReference type="ChEBI" id="CHEBI:49883"/>
    </cofactor>
    <text evidence="1">Binds 2 [4Fe-4S] clusters. One cluster is coordinated with 3 cysteines and an exchangeable S-adenosyl-L-methionine.</text>
</comment>
<comment type="subunit">
    <text evidence="1">Monomer.</text>
</comment>
<comment type="subcellular location">
    <subcellularLocation>
        <location evidence="1">Cytoplasm</location>
    </subcellularLocation>
</comment>
<comment type="similarity">
    <text evidence="1">Belongs to the methylthiotransferase family. MiaB subfamily.</text>
</comment>
<proteinExistence type="inferred from homology"/>
<reference key="1">
    <citation type="submission" date="2007-02" db="EMBL/GenBank/DDBJ databases">
        <title>Complete sequence of Clostridium thermocellum ATCC 27405.</title>
        <authorList>
            <consortium name="US DOE Joint Genome Institute"/>
            <person name="Copeland A."/>
            <person name="Lucas S."/>
            <person name="Lapidus A."/>
            <person name="Barry K."/>
            <person name="Detter J.C."/>
            <person name="Glavina del Rio T."/>
            <person name="Hammon N."/>
            <person name="Israni S."/>
            <person name="Dalin E."/>
            <person name="Tice H."/>
            <person name="Pitluck S."/>
            <person name="Chertkov O."/>
            <person name="Brettin T."/>
            <person name="Bruce D."/>
            <person name="Han C."/>
            <person name="Tapia R."/>
            <person name="Gilna P."/>
            <person name="Schmutz J."/>
            <person name="Larimer F."/>
            <person name="Land M."/>
            <person name="Hauser L."/>
            <person name="Kyrpides N."/>
            <person name="Mikhailova N."/>
            <person name="Wu J.H.D."/>
            <person name="Newcomb M."/>
            <person name="Richardson P."/>
        </authorList>
    </citation>
    <scope>NUCLEOTIDE SEQUENCE [LARGE SCALE GENOMIC DNA]</scope>
    <source>
        <strain>ATCC 27405 / DSM 1237 / JCM 9322 / NBRC 103400 / NCIMB 10682 / NRRL B-4536 / VPI 7372</strain>
    </source>
</reference>
<name>MIAB_ACET2</name>
<dbReference type="EC" id="2.8.4.3" evidence="1"/>
<dbReference type="EMBL" id="CP000568">
    <property type="protein sequence ID" value="ABN52018.1"/>
    <property type="molecule type" value="Genomic_DNA"/>
</dbReference>
<dbReference type="RefSeq" id="WP_003516358.1">
    <property type="nucleotide sequence ID" value="NC_009012.1"/>
</dbReference>
<dbReference type="SMR" id="A3DDI9"/>
<dbReference type="STRING" id="203119.Cthe_0783"/>
<dbReference type="GeneID" id="35803007"/>
<dbReference type="KEGG" id="cth:Cthe_0783"/>
<dbReference type="eggNOG" id="COG0621">
    <property type="taxonomic scope" value="Bacteria"/>
</dbReference>
<dbReference type="HOGENOM" id="CLU_018697_2_0_9"/>
<dbReference type="OrthoDB" id="9805215at2"/>
<dbReference type="Proteomes" id="UP000002145">
    <property type="component" value="Chromosome"/>
</dbReference>
<dbReference type="GO" id="GO:0005829">
    <property type="term" value="C:cytosol"/>
    <property type="evidence" value="ECO:0007669"/>
    <property type="project" value="TreeGrafter"/>
</dbReference>
<dbReference type="GO" id="GO:0051539">
    <property type="term" value="F:4 iron, 4 sulfur cluster binding"/>
    <property type="evidence" value="ECO:0007669"/>
    <property type="project" value="UniProtKB-UniRule"/>
</dbReference>
<dbReference type="GO" id="GO:0046872">
    <property type="term" value="F:metal ion binding"/>
    <property type="evidence" value="ECO:0007669"/>
    <property type="project" value="UniProtKB-KW"/>
</dbReference>
<dbReference type="GO" id="GO:0035597">
    <property type="term" value="F:N6-isopentenyladenosine methylthiotransferase activity"/>
    <property type="evidence" value="ECO:0007669"/>
    <property type="project" value="TreeGrafter"/>
</dbReference>
<dbReference type="CDD" id="cd01335">
    <property type="entry name" value="Radical_SAM"/>
    <property type="match status" value="1"/>
</dbReference>
<dbReference type="FunFam" id="3.40.50.12160:FF:000006">
    <property type="entry name" value="tRNA-2-methylthio-N(6)-dimethylallyladenosine synthase"/>
    <property type="match status" value="1"/>
</dbReference>
<dbReference type="FunFam" id="3.80.30.20:FF:000001">
    <property type="entry name" value="tRNA-2-methylthio-N(6)-dimethylallyladenosine synthase 2"/>
    <property type="match status" value="1"/>
</dbReference>
<dbReference type="Gene3D" id="3.40.50.12160">
    <property type="entry name" value="Methylthiotransferase, N-terminal domain"/>
    <property type="match status" value="1"/>
</dbReference>
<dbReference type="Gene3D" id="3.80.30.20">
    <property type="entry name" value="tm_1862 like domain"/>
    <property type="match status" value="1"/>
</dbReference>
<dbReference type="HAMAP" id="MF_01864">
    <property type="entry name" value="tRNA_metthiotr_MiaB"/>
    <property type="match status" value="1"/>
</dbReference>
<dbReference type="InterPro" id="IPR006638">
    <property type="entry name" value="Elp3/MiaA/NifB-like_rSAM"/>
</dbReference>
<dbReference type="InterPro" id="IPR005839">
    <property type="entry name" value="Methylthiotransferase"/>
</dbReference>
<dbReference type="InterPro" id="IPR020612">
    <property type="entry name" value="Methylthiotransferase_CS"/>
</dbReference>
<dbReference type="InterPro" id="IPR013848">
    <property type="entry name" value="Methylthiotransferase_N"/>
</dbReference>
<dbReference type="InterPro" id="IPR038135">
    <property type="entry name" value="Methylthiotransferase_N_sf"/>
</dbReference>
<dbReference type="InterPro" id="IPR006463">
    <property type="entry name" value="MiaB_methiolase"/>
</dbReference>
<dbReference type="InterPro" id="IPR007197">
    <property type="entry name" value="rSAM"/>
</dbReference>
<dbReference type="InterPro" id="IPR023404">
    <property type="entry name" value="rSAM_horseshoe"/>
</dbReference>
<dbReference type="InterPro" id="IPR002792">
    <property type="entry name" value="TRAM_dom"/>
</dbReference>
<dbReference type="NCBIfam" id="TIGR01574">
    <property type="entry name" value="miaB-methiolase"/>
    <property type="match status" value="1"/>
</dbReference>
<dbReference type="NCBIfam" id="TIGR00089">
    <property type="entry name" value="MiaB/RimO family radical SAM methylthiotransferase"/>
    <property type="match status" value="1"/>
</dbReference>
<dbReference type="PANTHER" id="PTHR43020">
    <property type="entry name" value="CDK5 REGULATORY SUBUNIT-ASSOCIATED PROTEIN 1"/>
    <property type="match status" value="1"/>
</dbReference>
<dbReference type="PANTHER" id="PTHR43020:SF2">
    <property type="entry name" value="MITOCHONDRIAL TRNA METHYLTHIOTRANSFERASE CDK5RAP1"/>
    <property type="match status" value="1"/>
</dbReference>
<dbReference type="Pfam" id="PF04055">
    <property type="entry name" value="Radical_SAM"/>
    <property type="match status" value="1"/>
</dbReference>
<dbReference type="Pfam" id="PF01938">
    <property type="entry name" value="TRAM"/>
    <property type="match status" value="1"/>
</dbReference>
<dbReference type="Pfam" id="PF00919">
    <property type="entry name" value="UPF0004"/>
    <property type="match status" value="1"/>
</dbReference>
<dbReference type="SFLD" id="SFLDF00273">
    <property type="entry name" value="(dimethylallyl)adenosine_tRNA"/>
    <property type="match status" value="1"/>
</dbReference>
<dbReference type="SFLD" id="SFLDG01082">
    <property type="entry name" value="B12-binding_domain_containing"/>
    <property type="match status" value="1"/>
</dbReference>
<dbReference type="SFLD" id="SFLDS00029">
    <property type="entry name" value="Radical_SAM"/>
    <property type="match status" value="1"/>
</dbReference>
<dbReference type="SMART" id="SM00729">
    <property type="entry name" value="Elp3"/>
    <property type="match status" value="1"/>
</dbReference>
<dbReference type="SUPFAM" id="SSF102114">
    <property type="entry name" value="Radical SAM enzymes"/>
    <property type="match status" value="1"/>
</dbReference>
<dbReference type="PROSITE" id="PS51449">
    <property type="entry name" value="MTTASE_N"/>
    <property type="match status" value="1"/>
</dbReference>
<dbReference type="PROSITE" id="PS01278">
    <property type="entry name" value="MTTASE_RADICAL"/>
    <property type="match status" value="1"/>
</dbReference>
<dbReference type="PROSITE" id="PS51918">
    <property type="entry name" value="RADICAL_SAM"/>
    <property type="match status" value="1"/>
</dbReference>
<dbReference type="PROSITE" id="PS50926">
    <property type="entry name" value="TRAM"/>
    <property type="match status" value="1"/>
</dbReference>
<accession>A3DDI9</accession>
<organism>
    <name type="scientific">Acetivibrio thermocellus (strain ATCC 27405 / DSM 1237 / JCM 9322 / NBRC 103400 / NCIMB 10682 / NRRL B-4536 / VPI 7372)</name>
    <name type="common">Clostridium thermocellum</name>
    <dbReference type="NCBI Taxonomy" id="203119"/>
    <lineage>
        <taxon>Bacteria</taxon>
        <taxon>Bacillati</taxon>
        <taxon>Bacillota</taxon>
        <taxon>Clostridia</taxon>
        <taxon>Eubacteriales</taxon>
        <taxon>Oscillospiraceae</taxon>
        <taxon>Acetivibrio</taxon>
    </lineage>
</organism>
<feature type="chain" id="PRO_0000374235" description="tRNA-2-methylthio-N(6)-dimethylallyladenosine synthase">
    <location>
        <begin position="1"/>
        <end position="480"/>
    </location>
</feature>
<feature type="domain" description="MTTase N-terminal" evidence="1">
    <location>
        <begin position="43"/>
        <end position="161"/>
    </location>
</feature>
<feature type="domain" description="Radical SAM core" evidence="2">
    <location>
        <begin position="184"/>
        <end position="414"/>
    </location>
</feature>
<feature type="domain" description="TRAM" evidence="1">
    <location>
        <begin position="417"/>
        <end position="480"/>
    </location>
</feature>
<feature type="binding site" evidence="1">
    <location>
        <position position="52"/>
    </location>
    <ligand>
        <name>[4Fe-4S] cluster</name>
        <dbReference type="ChEBI" id="CHEBI:49883"/>
        <label>1</label>
    </ligand>
</feature>
<feature type="binding site" evidence="1">
    <location>
        <position position="88"/>
    </location>
    <ligand>
        <name>[4Fe-4S] cluster</name>
        <dbReference type="ChEBI" id="CHEBI:49883"/>
        <label>1</label>
    </ligand>
</feature>
<feature type="binding site" evidence="1">
    <location>
        <position position="122"/>
    </location>
    <ligand>
        <name>[4Fe-4S] cluster</name>
        <dbReference type="ChEBI" id="CHEBI:49883"/>
        <label>1</label>
    </ligand>
</feature>
<feature type="binding site" evidence="1">
    <location>
        <position position="198"/>
    </location>
    <ligand>
        <name>[4Fe-4S] cluster</name>
        <dbReference type="ChEBI" id="CHEBI:49883"/>
        <label>2</label>
        <note>4Fe-4S-S-AdoMet</note>
    </ligand>
</feature>
<feature type="binding site" evidence="1">
    <location>
        <position position="202"/>
    </location>
    <ligand>
        <name>[4Fe-4S] cluster</name>
        <dbReference type="ChEBI" id="CHEBI:49883"/>
        <label>2</label>
        <note>4Fe-4S-S-AdoMet</note>
    </ligand>
</feature>
<feature type="binding site" evidence="1">
    <location>
        <position position="205"/>
    </location>
    <ligand>
        <name>[4Fe-4S] cluster</name>
        <dbReference type="ChEBI" id="CHEBI:49883"/>
        <label>2</label>
        <note>4Fe-4S-S-AdoMet</note>
    </ligand>
</feature>
<gene>
    <name evidence="1" type="primary">miaB</name>
    <name type="ordered locus">Cthe_0783</name>
</gene>
<protein>
    <recommendedName>
        <fullName evidence="1">tRNA-2-methylthio-N(6)-dimethylallyladenosine synthase</fullName>
        <ecNumber evidence="1">2.8.4.3</ecNumber>
    </recommendedName>
    <alternativeName>
        <fullName evidence="1">(Dimethylallyl)adenosine tRNA methylthiotransferase MiaB</fullName>
    </alternativeName>
    <alternativeName>
        <fullName evidence="1">tRNA-i(6)A37 methylthiotransferase</fullName>
    </alternativeName>
</protein>